<reference key="1">
    <citation type="journal article" date="2002" name="Mol. Microbiol.">
        <title>Genome sequence of Streptococcus agalactiae, a pathogen causing invasive neonatal disease.</title>
        <authorList>
            <person name="Glaser P."/>
            <person name="Rusniok C."/>
            <person name="Buchrieser C."/>
            <person name="Chevalier F."/>
            <person name="Frangeul L."/>
            <person name="Msadek T."/>
            <person name="Zouine M."/>
            <person name="Couve E."/>
            <person name="Lalioui L."/>
            <person name="Poyart C."/>
            <person name="Trieu-Cuot P."/>
            <person name="Kunst F."/>
        </authorList>
    </citation>
    <scope>NUCLEOTIDE SEQUENCE [LARGE SCALE GENOMIC DNA]</scope>
    <source>
        <strain>NEM316</strain>
    </source>
</reference>
<organism>
    <name type="scientific">Streptococcus agalactiae serotype III (strain NEM316)</name>
    <dbReference type="NCBI Taxonomy" id="211110"/>
    <lineage>
        <taxon>Bacteria</taxon>
        <taxon>Bacillati</taxon>
        <taxon>Bacillota</taxon>
        <taxon>Bacilli</taxon>
        <taxon>Lactobacillales</taxon>
        <taxon>Streptococcaceae</taxon>
        <taxon>Streptococcus</taxon>
    </lineage>
</organism>
<gene>
    <name evidence="1" type="primary">yabA</name>
    <name type="ordered locus">gbs1624</name>
</gene>
<protein>
    <recommendedName>
        <fullName evidence="1">Replication initiation control protein YabA</fullName>
    </recommendedName>
</protein>
<comment type="function">
    <text evidence="1">Involved in control of chromosome replication initiation. Inhibits the cooperative binding of DnaA to the oriC region, thus negatively regulating initiation of chromosome replication. Inhibits the ability of DnaA-ATP to form a helix on DNA; does not disassemble preformed DnaA-DNA helices. Decreases the residence time of DnaA on the chromosome at its binding sites (oriC, replication forks and promoter-binding sites). Tethers DnaA to the replication machinery via the DNA polymerase beta sliding clamp subunit (dnaN). Associates with oriC and other DnaA targets on the chromosome in a DnaA-dependent manner.</text>
</comment>
<comment type="cofactor">
    <cofactor evidence="1">
        <name>Zn(2+)</name>
        <dbReference type="ChEBI" id="CHEBI:29105"/>
    </cofactor>
    <text evidence="1">Binds 1 zinc ion per subunit.</text>
</comment>
<comment type="subunit">
    <text evidence="1">Homotetramer. Interacts with both DnaA and DnaN, acting as a bridge between these two proteins.</text>
</comment>
<comment type="subcellular location">
    <subcellularLocation>
        <location evidence="1">Cytoplasm</location>
        <location evidence="1">Nucleoid</location>
    </subcellularLocation>
    <text evidence="1">Localizes in tight foci, which correspond to the replisome at mid-cell throughout the cell cycle.</text>
</comment>
<comment type="similarity">
    <text evidence="1">Belongs to the YabA family.</text>
</comment>
<dbReference type="EMBL" id="AL766852">
    <property type="protein sequence ID" value="CAD47283.1"/>
    <property type="molecule type" value="Genomic_DNA"/>
</dbReference>
<dbReference type="RefSeq" id="WP_000358198.1">
    <property type="nucleotide sequence ID" value="NC_004368.1"/>
</dbReference>
<dbReference type="SMR" id="Q8E3Y0"/>
<dbReference type="GeneID" id="66886420"/>
<dbReference type="KEGG" id="san:gbs1624"/>
<dbReference type="eggNOG" id="COG4467">
    <property type="taxonomic scope" value="Bacteria"/>
</dbReference>
<dbReference type="HOGENOM" id="CLU_157169_0_0_9"/>
<dbReference type="Proteomes" id="UP000000823">
    <property type="component" value="Chromosome"/>
</dbReference>
<dbReference type="GO" id="GO:0009295">
    <property type="term" value="C:nucleoid"/>
    <property type="evidence" value="ECO:0007669"/>
    <property type="project" value="UniProtKB-SubCell"/>
</dbReference>
<dbReference type="GO" id="GO:0006260">
    <property type="term" value="P:DNA replication"/>
    <property type="evidence" value="ECO:0007669"/>
    <property type="project" value="UniProtKB-UniRule"/>
</dbReference>
<dbReference type="HAMAP" id="MF_01159">
    <property type="entry name" value="YabA"/>
    <property type="match status" value="1"/>
</dbReference>
<dbReference type="InterPro" id="IPR010377">
    <property type="entry name" value="YabA"/>
</dbReference>
<dbReference type="NCBIfam" id="NF009640">
    <property type="entry name" value="PRK13169.1-1"/>
    <property type="match status" value="1"/>
</dbReference>
<dbReference type="Pfam" id="PF06156">
    <property type="entry name" value="YabA"/>
    <property type="match status" value="1"/>
</dbReference>
<dbReference type="PIRSF" id="PIRSF021439">
    <property type="entry name" value="DUF972"/>
    <property type="match status" value="1"/>
</dbReference>
<name>YABA_STRA3</name>
<keyword id="KW-0963">Cytoplasm</keyword>
<keyword id="KW-0235">DNA replication</keyword>
<keyword id="KW-0236">DNA replication inhibitor</keyword>
<keyword id="KW-0479">Metal-binding</keyword>
<keyword id="KW-0862">Zinc</keyword>
<sequence length="108" mass="12655">MDKKDLFDAFDDFSQNLLVGLSEIETMKKQIQKLLEENTVLRIENGKLRERLSVIEAETETAVKNSKQGRELLEGIYNDGFHICNTFYGQRRENDEECAFCIELLYRD</sequence>
<feature type="chain" id="PRO_0000211924" description="Replication initiation control protein YabA">
    <location>
        <begin position="1"/>
        <end position="108"/>
    </location>
</feature>
<feature type="binding site" evidence="1">
    <location>
        <position position="82"/>
    </location>
    <ligand>
        <name>Zn(2+)</name>
        <dbReference type="ChEBI" id="CHEBI:29105"/>
    </ligand>
</feature>
<feature type="binding site" evidence="1">
    <location>
        <position position="84"/>
    </location>
    <ligand>
        <name>Zn(2+)</name>
        <dbReference type="ChEBI" id="CHEBI:29105"/>
    </ligand>
</feature>
<feature type="binding site" evidence="1">
    <location>
        <position position="98"/>
    </location>
    <ligand>
        <name>Zn(2+)</name>
        <dbReference type="ChEBI" id="CHEBI:29105"/>
    </ligand>
</feature>
<feature type="binding site" evidence="1">
    <location>
        <position position="101"/>
    </location>
    <ligand>
        <name>Zn(2+)</name>
        <dbReference type="ChEBI" id="CHEBI:29105"/>
    </ligand>
</feature>
<accession>Q8E3Y0</accession>
<proteinExistence type="inferred from homology"/>
<evidence type="ECO:0000255" key="1">
    <source>
        <dbReference type="HAMAP-Rule" id="MF_01159"/>
    </source>
</evidence>